<proteinExistence type="inferred from homology"/>
<reference key="1">
    <citation type="journal article" date="1998" name="Science">
        <title>Genome sequence of the nematode C. elegans: a platform for investigating biology.</title>
        <authorList>
            <consortium name="The C. elegans sequencing consortium"/>
        </authorList>
    </citation>
    <scope>NUCLEOTIDE SEQUENCE [LARGE SCALE GENOMIC DNA]</scope>
    <source>
        <strain>Bristol N2</strain>
    </source>
</reference>
<gene>
    <name type="ORF">F12F6.7</name>
</gene>
<dbReference type="EC" id="2.7.7.7"/>
<dbReference type="EMBL" id="Z73425">
    <property type="protein sequence ID" value="CAA97785.1"/>
    <property type="molecule type" value="Genomic_DNA"/>
</dbReference>
<dbReference type="PIR" id="T20798">
    <property type="entry name" value="T20798"/>
</dbReference>
<dbReference type="RefSeq" id="NP_502177.1">
    <property type="nucleotide sequence ID" value="NM_069776.7"/>
</dbReference>
<dbReference type="SMR" id="Q19366"/>
<dbReference type="BioGRID" id="43174">
    <property type="interactions" value="13"/>
</dbReference>
<dbReference type="FunCoup" id="Q19366">
    <property type="interactions" value="1577"/>
</dbReference>
<dbReference type="IntAct" id="Q19366">
    <property type="interactions" value="1"/>
</dbReference>
<dbReference type="STRING" id="6239.F12F6.7.2"/>
<dbReference type="PaxDb" id="6239-F12F6.7.1"/>
<dbReference type="PeptideAtlas" id="Q19366"/>
<dbReference type="EnsemblMetazoa" id="F12F6.7.1">
    <property type="protein sequence ID" value="F12F6.7.1"/>
    <property type="gene ID" value="WBGene00008722"/>
</dbReference>
<dbReference type="GeneID" id="178077"/>
<dbReference type="KEGG" id="cel:CELE_F12F6.7"/>
<dbReference type="UCSC" id="F12F6.7.1">
    <property type="organism name" value="c. elegans"/>
</dbReference>
<dbReference type="AGR" id="WB:WBGene00008722"/>
<dbReference type="CTD" id="178077"/>
<dbReference type="WormBase" id="F12F6.7">
    <property type="protein sequence ID" value="CE05595"/>
    <property type="gene ID" value="WBGene00008722"/>
</dbReference>
<dbReference type="eggNOG" id="KOG2732">
    <property type="taxonomic scope" value="Eukaryota"/>
</dbReference>
<dbReference type="GeneTree" id="ENSGT00390000006780"/>
<dbReference type="HOGENOM" id="CLU_021763_0_0_1"/>
<dbReference type="InParanoid" id="Q19366"/>
<dbReference type="OMA" id="HCILIGT"/>
<dbReference type="OrthoDB" id="3763at2759"/>
<dbReference type="PhylomeDB" id="Q19366"/>
<dbReference type="Reactome" id="R-CEL-110314">
    <property type="pathway name" value="Recognition of DNA damage by PCNA-containing replication complex"/>
</dbReference>
<dbReference type="Reactome" id="R-CEL-5651801">
    <property type="pathway name" value="PCNA-Dependent Long Patch Base Excision Repair"/>
</dbReference>
<dbReference type="Reactome" id="R-CEL-5656169">
    <property type="pathway name" value="Termination of translesion DNA synthesis"/>
</dbReference>
<dbReference type="Reactome" id="R-CEL-5696397">
    <property type="pathway name" value="Gap-filling DNA repair synthesis and ligation in GG-NER"/>
</dbReference>
<dbReference type="Reactome" id="R-CEL-5696400">
    <property type="pathway name" value="Dual Incision in GG-NER"/>
</dbReference>
<dbReference type="Reactome" id="R-CEL-6782135">
    <property type="pathway name" value="Dual incision in TC-NER"/>
</dbReference>
<dbReference type="Reactome" id="R-CEL-6782210">
    <property type="pathway name" value="Gap-filling DNA repair synthesis and ligation in TC-NER"/>
</dbReference>
<dbReference type="Reactome" id="R-CEL-69091">
    <property type="pathway name" value="Polymerase switching"/>
</dbReference>
<dbReference type="Reactome" id="R-CEL-69166">
    <property type="pathway name" value="Removal of the Flap Intermediate"/>
</dbReference>
<dbReference type="Reactome" id="R-CEL-69183">
    <property type="pathway name" value="Processive synthesis on the lagging strand"/>
</dbReference>
<dbReference type="PRO" id="PR:Q19366"/>
<dbReference type="Proteomes" id="UP000001940">
    <property type="component" value="Chromosome IV"/>
</dbReference>
<dbReference type="Bgee" id="WBGene00008722">
    <property type="expression patterns" value="Expressed in germ line (C elegans) and 4 other cell types or tissues"/>
</dbReference>
<dbReference type="GO" id="GO:0043625">
    <property type="term" value="C:delta DNA polymerase complex"/>
    <property type="evidence" value="ECO:0000318"/>
    <property type="project" value="GO_Central"/>
</dbReference>
<dbReference type="GO" id="GO:0003677">
    <property type="term" value="F:DNA binding"/>
    <property type="evidence" value="ECO:0007669"/>
    <property type="project" value="InterPro"/>
</dbReference>
<dbReference type="GO" id="GO:0003887">
    <property type="term" value="F:DNA-directed DNA polymerase activity"/>
    <property type="evidence" value="ECO:0007669"/>
    <property type="project" value="UniProtKB-KW"/>
</dbReference>
<dbReference type="GO" id="GO:0006271">
    <property type="term" value="P:DNA strand elongation involved in DNA replication"/>
    <property type="evidence" value="ECO:0000318"/>
    <property type="project" value="GO_Central"/>
</dbReference>
<dbReference type="CDD" id="cd07387">
    <property type="entry name" value="MPP_PolD2_C"/>
    <property type="match status" value="1"/>
</dbReference>
<dbReference type="Gene3D" id="2.40.50.430">
    <property type="match status" value="1"/>
</dbReference>
<dbReference type="Gene3D" id="3.60.21.50">
    <property type="match status" value="1"/>
</dbReference>
<dbReference type="InterPro" id="IPR007185">
    <property type="entry name" value="DNA_pol_a/d/e_bsu"/>
</dbReference>
<dbReference type="InterPro" id="IPR040663">
    <property type="entry name" value="DNA_pol_D_N"/>
</dbReference>
<dbReference type="InterPro" id="IPR024826">
    <property type="entry name" value="DNA_pol_delta/II_ssu"/>
</dbReference>
<dbReference type="InterPro" id="IPR041863">
    <property type="entry name" value="PolD2_C"/>
</dbReference>
<dbReference type="PANTHER" id="PTHR10416">
    <property type="entry name" value="DNA POLYMERASE DELTA SUBUNIT 2"/>
    <property type="match status" value="1"/>
</dbReference>
<dbReference type="PANTHER" id="PTHR10416:SF0">
    <property type="entry name" value="DNA POLYMERASE DELTA SUBUNIT 2"/>
    <property type="match status" value="1"/>
</dbReference>
<dbReference type="Pfam" id="PF18018">
    <property type="entry name" value="DNA_pol_D_N"/>
    <property type="match status" value="1"/>
</dbReference>
<dbReference type="Pfam" id="PF04042">
    <property type="entry name" value="DNA_pol_E_B"/>
    <property type="match status" value="1"/>
</dbReference>
<comment type="function">
    <text>The function of the small subunit is not yet clear.</text>
</comment>
<comment type="catalytic activity">
    <reaction>
        <text>DNA(n) + a 2'-deoxyribonucleoside 5'-triphosphate = DNA(n+1) + diphosphate</text>
        <dbReference type="Rhea" id="RHEA:22508"/>
        <dbReference type="Rhea" id="RHEA-COMP:17339"/>
        <dbReference type="Rhea" id="RHEA-COMP:17340"/>
        <dbReference type="ChEBI" id="CHEBI:33019"/>
        <dbReference type="ChEBI" id="CHEBI:61560"/>
        <dbReference type="ChEBI" id="CHEBI:173112"/>
        <dbReference type="EC" id="2.7.7.7"/>
    </reaction>
</comment>
<comment type="subunit">
    <text evidence="1">Heterodimer with subunits of 125 kDa and 50 kDa.</text>
</comment>
<comment type="subcellular location">
    <subcellularLocation>
        <location evidence="1">Nucleus</location>
    </subcellularLocation>
</comment>
<comment type="similarity">
    <text evidence="2">Belongs to the DNA polymerase delta/II small subunit family.</text>
</comment>
<accession>Q19366</accession>
<evidence type="ECO:0000250" key="1"/>
<evidence type="ECO:0000305" key="2"/>
<organism>
    <name type="scientific">Caenorhabditis elegans</name>
    <dbReference type="NCBI Taxonomy" id="6239"/>
    <lineage>
        <taxon>Eukaryota</taxon>
        <taxon>Metazoa</taxon>
        <taxon>Ecdysozoa</taxon>
        <taxon>Nematoda</taxon>
        <taxon>Chromadorea</taxon>
        <taxon>Rhabditida</taxon>
        <taxon>Rhabditina</taxon>
        <taxon>Rhabditomorpha</taxon>
        <taxon>Rhabditoidea</taxon>
        <taxon>Rhabditidae</taxon>
        <taxon>Peloderinae</taxon>
        <taxon>Caenorhabditis</taxon>
    </lineage>
</organism>
<keyword id="KW-0235">DNA replication</keyword>
<keyword id="KW-0239">DNA-directed DNA polymerase</keyword>
<keyword id="KW-0548">Nucleotidyltransferase</keyword>
<keyword id="KW-0539">Nucleus</keyword>
<keyword id="KW-1185">Reference proteome</keyword>
<keyword id="KW-0808">Transferase</keyword>
<sequence>METAWSNILNYKNVSDRYILTEKDKKGAFTRQYFEVYEARLKELKPRILENAEREIGKGKFTHSQLSDAKQDEEIFVVGVIVKRIAARPSILKSLLNEDKVAYDDYEEDAEEDEVKRYAGSIEDRIELESDKQTVRLEGNISMDECATGCCVGVLGKLGKEGVFHVNRLVWPSVKVPKKVAVDGTIAFVSGLDLTGDLEDDRLTISGLEFMADWMNVQVGNENQCPPIDRLVVIGPLVETKSNGCDVQSVVRTLTLSRAEKHSSTASLITVDKIINSIAEKPLVNTVDVTPGVGDPCSSMWPLPPIHRVCLPRCGMSDKKVNLVTNPYEFEVNGLRVMTMSGENVSELLRTSLKWTGADAIENIIKWQHVAPNCPDTLDAFPVAERDPLIMDITPHVIICGNQPHAEFRHIPIDGSNCLVVCLPKFSKTRVACFLNLSDLSLKWQNFDHQF</sequence>
<feature type="chain" id="PRO_0000096169" description="Probable DNA polymerase delta small subunit">
    <location>
        <begin position="1"/>
        <end position="451"/>
    </location>
</feature>
<protein>
    <recommendedName>
        <fullName>Probable DNA polymerase delta small subunit</fullName>
        <ecNumber>2.7.7.7</ecNumber>
    </recommendedName>
</protein>
<name>DPOD2_CAEEL</name>